<comment type="function">
    <text evidence="1">Redox regulated molecular chaperone. Protects both thermally unfolding and oxidatively damaged proteins from irreversible aggregation. Plays an important role in the bacterial defense system toward oxidative stress.</text>
</comment>
<comment type="subcellular location">
    <subcellularLocation>
        <location evidence="1">Cytoplasm</location>
    </subcellularLocation>
</comment>
<comment type="PTM">
    <text evidence="1">Under oxidizing conditions two disulfide bonds are formed involving the reactive cysteines. Under reducing conditions zinc is bound to the reactive cysteines and the protein is inactive.</text>
</comment>
<comment type="similarity">
    <text evidence="1">Belongs to the HSP33 family.</text>
</comment>
<reference key="1">
    <citation type="journal article" date="2006" name="Proc. Natl. Acad. Sci. U.S.A.">
        <title>Comparative genomics of the lactic acid bacteria.</title>
        <authorList>
            <person name="Makarova K.S."/>
            <person name="Slesarev A."/>
            <person name="Wolf Y.I."/>
            <person name="Sorokin A."/>
            <person name="Mirkin B."/>
            <person name="Koonin E.V."/>
            <person name="Pavlov A."/>
            <person name="Pavlova N."/>
            <person name="Karamychev V."/>
            <person name="Polouchine N."/>
            <person name="Shakhova V."/>
            <person name="Grigoriev I."/>
            <person name="Lou Y."/>
            <person name="Rohksar D."/>
            <person name="Lucas S."/>
            <person name="Huang K."/>
            <person name="Goodstein D.M."/>
            <person name="Hawkins T."/>
            <person name="Plengvidhya V."/>
            <person name="Welker D."/>
            <person name="Hughes J."/>
            <person name="Goh Y."/>
            <person name="Benson A."/>
            <person name="Baldwin K."/>
            <person name="Lee J.-H."/>
            <person name="Diaz-Muniz I."/>
            <person name="Dosti B."/>
            <person name="Smeianov V."/>
            <person name="Wechter W."/>
            <person name="Barabote R."/>
            <person name="Lorca G."/>
            <person name="Altermann E."/>
            <person name="Barrangou R."/>
            <person name="Ganesan B."/>
            <person name="Xie Y."/>
            <person name="Rawsthorne H."/>
            <person name="Tamir D."/>
            <person name="Parker C."/>
            <person name="Breidt F."/>
            <person name="Broadbent J.R."/>
            <person name="Hutkins R."/>
            <person name="O'Sullivan D."/>
            <person name="Steele J."/>
            <person name="Unlu G."/>
            <person name="Saier M.H. Jr."/>
            <person name="Klaenhammer T."/>
            <person name="Richardson P."/>
            <person name="Kozyavkin S."/>
            <person name="Weimer B.C."/>
            <person name="Mills D.A."/>
        </authorList>
    </citation>
    <scope>NUCLEOTIDE SEQUENCE [LARGE SCALE GENOMIC DNA]</scope>
    <source>
        <strain>SK11</strain>
    </source>
</reference>
<accession>Q02WK6</accession>
<proteinExistence type="inferred from homology"/>
<name>HSLO_LACLS</name>
<gene>
    <name evidence="1" type="primary">hslO</name>
    <name type="ordered locus">LACR_2209</name>
</gene>
<sequence length="288" mass="31648">MDKIIKSISKNGHFRAFALDSTLTVREAQERHQTWPTSTVALGRTLIAAQVLGANEKGDTKITVKVLGDGAMGPIIAVADSKGHVKGYVKNRELDYKKASTGEVLVAPFVGNGFLVVVKDMGLKQPYSGQVDLITGEIGEDLAWYFLSSEQTPSSVGVNVLLNEDSDTVKIAGGFMLQALPDATDEEITEIEHNIKSMPSIATMLTSDEPLKTMLDNIYGDMEYKNLGEFPLAFKCDCSKERFLEGIKSLGREPIEEMIAEDHGAEIICQFCENKYEYSEEELKALIN</sequence>
<feature type="chain" id="PRO_1000015550" description="33 kDa chaperonin">
    <location>
        <begin position="1"/>
        <end position="288"/>
    </location>
</feature>
<feature type="disulfide bond" description="Redox-active" evidence="1">
    <location>
        <begin position="236"/>
        <end position="238"/>
    </location>
</feature>
<feature type="disulfide bond" description="Redox-active" evidence="1">
    <location>
        <begin position="269"/>
        <end position="272"/>
    </location>
</feature>
<keyword id="KW-0143">Chaperone</keyword>
<keyword id="KW-0963">Cytoplasm</keyword>
<keyword id="KW-1015">Disulfide bond</keyword>
<keyword id="KW-0676">Redox-active center</keyword>
<keyword id="KW-0862">Zinc</keyword>
<protein>
    <recommendedName>
        <fullName evidence="1">33 kDa chaperonin</fullName>
    </recommendedName>
    <alternativeName>
        <fullName evidence="1">Heat shock protein 33 homolog</fullName>
        <shortName evidence="1">HSP33</shortName>
    </alternativeName>
</protein>
<dbReference type="EMBL" id="CP000425">
    <property type="protein sequence ID" value="ABJ73666.1"/>
    <property type="molecule type" value="Genomic_DNA"/>
</dbReference>
<dbReference type="RefSeq" id="WP_011677002.1">
    <property type="nucleotide sequence ID" value="NC_008527.1"/>
</dbReference>
<dbReference type="SMR" id="Q02WK6"/>
<dbReference type="KEGG" id="llc:LACR_2209"/>
<dbReference type="HOGENOM" id="CLU_054493_1_0_9"/>
<dbReference type="Proteomes" id="UP000000240">
    <property type="component" value="Chromosome"/>
</dbReference>
<dbReference type="GO" id="GO:0005737">
    <property type="term" value="C:cytoplasm"/>
    <property type="evidence" value="ECO:0007669"/>
    <property type="project" value="UniProtKB-SubCell"/>
</dbReference>
<dbReference type="GO" id="GO:0044183">
    <property type="term" value="F:protein folding chaperone"/>
    <property type="evidence" value="ECO:0007669"/>
    <property type="project" value="TreeGrafter"/>
</dbReference>
<dbReference type="GO" id="GO:0051082">
    <property type="term" value="F:unfolded protein binding"/>
    <property type="evidence" value="ECO:0007669"/>
    <property type="project" value="UniProtKB-UniRule"/>
</dbReference>
<dbReference type="GO" id="GO:0042026">
    <property type="term" value="P:protein refolding"/>
    <property type="evidence" value="ECO:0007669"/>
    <property type="project" value="TreeGrafter"/>
</dbReference>
<dbReference type="CDD" id="cd00498">
    <property type="entry name" value="Hsp33"/>
    <property type="match status" value="1"/>
</dbReference>
<dbReference type="Gene3D" id="3.55.30.10">
    <property type="entry name" value="Hsp33 domain"/>
    <property type="match status" value="1"/>
</dbReference>
<dbReference type="Gene3D" id="3.90.1280.10">
    <property type="entry name" value="HSP33 redox switch-like"/>
    <property type="match status" value="1"/>
</dbReference>
<dbReference type="HAMAP" id="MF_00117">
    <property type="entry name" value="HslO"/>
    <property type="match status" value="1"/>
</dbReference>
<dbReference type="InterPro" id="IPR000397">
    <property type="entry name" value="Heat_shock_Hsp33"/>
</dbReference>
<dbReference type="InterPro" id="IPR016154">
    <property type="entry name" value="Heat_shock_Hsp33_C"/>
</dbReference>
<dbReference type="InterPro" id="IPR016153">
    <property type="entry name" value="Heat_shock_Hsp33_N"/>
</dbReference>
<dbReference type="NCBIfam" id="NF001033">
    <property type="entry name" value="PRK00114.1"/>
    <property type="match status" value="1"/>
</dbReference>
<dbReference type="PANTHER" id="PTHR30111">
    <property type="entry name" value="33 KDA CHAPERONIN"/>
    <property type="match status" value="1"/>
</dbReference>
<dbReference type="PANTHER" id="PTHR30111:SF1">
    <property type="entry name" value="33 KDA CHAPERONIN"/>
    <property type="match status" value="1"/>
</dbReference>
<dbReference type="Pfam" id="PF01430">
    <property type="entry name" value="HSP33"/>
    <property type="match status" value="1"/>
</dbReference>
<dbReference type="PIRSF" id="PIRSF005261">
    <property type="entry name" value="Heat_shock_Hsp33"/>
    <property type="match status" value="1"/>
</dbReference>
<dbReference type="SUPFAM" id="SSF64397">
    <property type="entry name" value="Hsp33 domain"/>
    <property type="match status" value="1"/>
</dbReference>
<dbReference type="SUPFAM" id="SSF118352">
    <property type="entry name" value="HSP33 redox switch-like"/>
    <property type="match status" value="1"/>
</dbReference>
<organism>
    <name type="scientific">Lactococcus lactis subsp. cremoris (strain SK11)</name>
    <dbReference type="NCBI Taxonomy" id="272622"/>
    <lineage>
        <taxon>Bacteria</taxon>
        <taxon>Bacillati</taxon>
        <taxon>Bacillota</taxon>
        <taxon>Bacilli</taxon>
        <taxon>Lactobacillales</taxon>
        <taxon>Streptococcaceae</taxon>
        <taxon>Lactococcus</taxon>
        <taxon>Lactococcus cremoris subsp. cremoris</taxon>
    </lineage>
</organism>
<evidence type="ECO:0000255" key="1">
    <source>
        <dbReference type="HAMAP-Rule" id="MF_00117"/>
    </source>
</evidence>